<reference key="1">
    <citation type="journal article" date="2004" name="Development">
        <title>Zebrafish Dapper1 and Dapper2 play distinct roles in Wnt-mediated developmental processes.</title>
        <authorList>
            <person name="Waxman J.S."/>
            <person name="Hocking A.M."/>
            <person name="Stoick C.L."/>
            <person name="Moon R.T."/>
        </authorList>
    </citation>
    <scope>NUCLEOTIDE SEQUENCE [MRNA]</scope>
    <scope>FUNCTION</scope>
    <scope>INTERACTION WITH DVL2</scope>
    <scope>SUBCELLULAR LOCATION</scope>
    <scope>DEVELOPMENTAL STAGE</scope>
</reference>
<reference key="2">
    <citation type="journal article" date="2004" name="Dev. Dyn.">
        <title>Two Frodo/Dapper homologs are expressed in the developing brain and mesoderm of zebrafish.</title>
        <authorList>
            <person name="Gillhouse M."/>
            <person name="Wagner Nyholm M."/>
            <person name="Hikasa H."/>
            <person name="Sokol S.Y."/>
            <person name="Grinblat Y."/>
        </authorList>
    </citation>
    <scope>NUCLEOTIDE SEQUENCE [MRNA]</scope>
    <scope>DEVELOPMENTAL STAGE</scope>
    <source>
        <tissue>Embryo</tissue>
    </source>
</reference>
<reference key="3">
    <citation type="journal article" date="2004" name="Science">
        <title>Zebrafish Dpr2 inhibits mesoderm induction by promoting degradation of nodal receptors.</title>
        <authorList>
            <person name="Zhang L."/>
            <person name="Zhou H."/>
            <person name="Su Y."/>
            <person name="Sun Z."/>
            <person name="Zhang H."/>
            <person name="Zhang L."/>
            <person name="Zhang Y."/>
            <person name="Ning Y."/>
            <person name="Chen Y.-G."/>
            <person name="Meng A."/>
        </authorList>
    </citation>
    <scope>NUCLEOTIDE SEQUENCE [MRNA]</scope>
    <scope>FUNCTION</scope>
    <scope>SUBCELLULAR LOCATION</scope>
    <scope>DEVELOPMENTAL STAGE</scope>
</reference>
<reference key="4">
    <citation type="submission" date="2006-11" db="EMBL/GenBank/DDBJ databases">
        <authorList>
            <consortium name="NIH - Zebrafish Gene Collection (ZGC) project"/>
        </authorList>
    </citation>
    <scope>NUCLEOTIDE SEQUENCE [LARGE SCALE MRNA]</scope>
    <source>
        <tissue>Embryo</tissue>
    </source>
</reference>
<proteinExistence type="evidence at protein level"/>
<protein>
    <recommendedName>
        <fullName>Dapper homolog 2</fullName>
    </recommendedName>
    <alternativeName>
        <fullName>Frodo 2</fullName>
    </alternativeName>
</protein>
<name>DACT2_DANRE</name>
<keyword id="KW-1003">Cell membrane</keyword>
<keyword id="KW-0175">Coiled coil</keyword>
<keyword id="KW-0963">Cytoplasm</keyword>
<keyword id="KW-0217">Developmental protein</keyword>
<keyword id="KW-0967">Endosome</keyword>
<keyword id="KW-0472">Membrane</keyword>
<keyword id="KW-0539">Nucleus</keyword>
<keyword id="KW-1185">Reference proteome</keyword>
<keyword id="KW-0879">Wnt signaling pathway</keyword>
<comment type="function">
    <text evidence="5 6">Involved in regulation of intracellular signaling pathways during development. Specifically thought to play a role in canonical and/or non-canonical Wnt signaling pathways through interaction with DSH (Dishevelled) family proteins. Positive regulator of the Wnt signaling pathway which acts downstream of wnt1 indicative for non-canonical Wnt signaling. Also negatively regulates the Nodal signaling pathway, possibly by promoting the lysosomal degradation of Nodal receptors. Required for convergent extension movements in gastrulation.</text>
</comment>
<comment type="subunit">
    <text evidence="6">Interacts with dvl2.</text>
</comment>
<comment type="subcellular location">
    <subcellularLocation>
        <location>Cytoplasm</location>
    </subcellularLocation>
    <subcellularLocation>
        <location>Late endosome</location>
    </subcellularLocation>
    <subcellularLocation>
        <location>Nucleus</location>
    </subcellularLocation>
    <subcellularLocation>
        <location>Cell membrane</location>
    </subcellularLocation>
    <text>Predominantly cytoplasmic. Also found in late endosomes, the nucleus and at the cell membrane.</text>
</comment>
<comment type="developmental stage">
    <text evidence="4 5 6">Expressed maternally. Restricted to the dorsal blastoderm margin in early gastrula and the future dorsal side of the embryo at the sphere stage. At the shield stage, expressed throughout the shield and in lateral areas. Expressed in the anterior brain and axial mesoderm at the tailbud stage, and subsequently maintained in the lateral mesoderm. During somitogenesis, up-regulated in the anterior of the older somites, and expressed in the posterior presomitic mesoderm and tailbud.</text>
</comment>
<comment type="domain">
    <text evidence="1">The C-terminal PDZ-binding motif may mediate interaction with the PDZ domains of DSH (Dishevelled) family proteins.</text>
</comment>
<comment type="similarity">
    <text evidence="7">Belongs to the dapper family.</text>
</comment>
<comment type="sequence caution" evidence="7">
    <conflict type="frameshift">
        <sequence resource="EMBL-CDS" id="AAO49711"/>
    </conflict>
</comment>
<feature type="chain" id="PRO_0000191359" description="Dapper homolog 2">
    <location>
        <begin position="1"/>
        <end position="837"/>
    </location>
</feature>
<feature type="region of interest" description="Disordered" evidence="3">
    <location>
        <begin position="189"/>
        <end position="265"/>
    </location>
</feature>
<feature type="region of interest" description="Disordered" evidence="3">
    <location>
        <begin position="424"/>
        <end position="497"/>
    </location>
</feature>
<feature type="region of interest" description="Disordered" evidence="3">
    <location>
        <begin position="512"/>
        <end position="564"/>
    </location>
</feature>
<feature type="region of interest" description="Disordered" evidence="3">
    <location>
        <begin position="600"/>
        <end position="649"/>
    </location>
</feature>
<feature type="region of interest" description="Disordered" evidence="3">
    <location>
        <begin position="738"/>
        <end position="782"/>
    </location>
</feature>
<feature type="coiled-coil region" evidence="2">
    <location>
        <begin position="65"/>
        <end position="113"/>
    </location>
</feature>
<feature type="short sequence motif" description="PDZ-binding" evidence="1">
    <location>
        <begin position="834"/>
        <end position="837"/>
    </location>
</feature>
<feature type="compositionally biased region" description="Polar residues" evidence="3">
    <location>
        <begin position="246"/>
        <end position="265"/>
    </location>
</feature>
<feature type="compositionally biased region" description="Polar residues" evidence="3">
    <location>
        <begin position="432"/>
        <end position="445"/>
    </location>
</feature>
<feature type="compositionally biased region" description="Basic and acidic residues" evidence="3">
    <location>
        <begin position="456"/>
        <end position="466"/>
    </location>
</feature>
<feature type="compositionally biased region" description="Basic and acidic residues" evidence="3">
    <location>
        <begin position="486"/>
        <end position="496"/>
    </location>
</feature>
<feature type="compositionally biased region" description="Basic and acidic residues" evidence="3">
    <location>
        <begin position="548"/>
        <end position="560"/>
    </location>
</feature>
<feature type="compositionally biased region" description="Polar residues" evidence="3">
    <location>
        <begin position="741"/>
        <end position="759"/>
    </location>
</feature>
<feature type="compositionally biased region" description="Acidic residues" evidence="3">
    <location>
        <begin position="768"/>
        <end position="782"/>
    </location>
</feature>
<feature type="sequence conflict" description="In Ref. 4; AAI27384." evidence="7" ref="4">
    <original>A</original>
    <variation>V</variation>
    <location>
        <position position="76"/>
    </location>
</feature>
<feature type="sequence conflict" description="In Ref. 3; AAS82844." evidence="7" ref="3">
    <original>T</original>
    <variation>S</variation>
    <location>
        <position position="168"/>
    </location>
</feature>
<feature type="sequence conflict" description="In Ref. 4; AAI27384." evidence="7" ref="4">
    <original>S</original>
    <variation>A</variation>
    <location>
        <position position="169"/>
    </location>
</feature>
<feature type="sequence conflict" description="In Ref. 2; AAO49711." evidence="7" ref="2">
    <original>G</original>
    <variation>E</variation>
    <location>
        <position position="300"/>
    </location>
</feature>
<feature type="sequence conflict" description="In Ref. 1; AAT42266." evidence="7" ref="1">
    <original>E</original>
    <variation>D</variation>
    <location>
        <position position="319"/>
    </location>
</feature>
<feature type="sequence conflict" description="In Ref. 1; AAT42266." evidence="7" ref="1">
    <original>S</original>
    <variation>L</variation>
    <location>
        <position position="325"/>
    </location>
</feature>
<feature type="sequence conflict" description="In Ref. 3; AAS82844." evidence="7" ref="3">
    <original>S</original>
    <variation>F</variation>
    <location>
        <position position="337"/>
    </location>
</feature>
<feature type="sequence conflict" description="In Ref. 1; AAT42266." evidence="7" ref="1">
    <original>S</original>
    <variation>C</variation>
    <location>
        <position position="345"/>
    </location>
</feature>
<feature type="sequence conflict" description="In Ref. 4; AAI27384." evidence="7" ref="4">
    <original>R</original>
    <variation>K</variation>
    <location>
        <position position="361"/>
    </location>
</feature>
<feature type="sequence conflict" description="In Ref. 1; AAT42266." evidence="7" ref="1">
    <original>G</original>
    <variation>R</variation>
    <location>
        <position position="368"/>
    </location>
</feature>
<feature type="sequence conflict" description="In Ref. 1; AAT42266 and 4; AAI27384." evidence="7" ref="1 4">
    <original>S</original>
    <variation>T</variation>
    <location>
        <position position="383"/>
    </location>
</feature>
<feature type="sequence conflict" description="In Ref. 1; AAT42266." evidence="7" ref="1">
    <original>L</original>
    <variation>V</variation>
    <location>
        <position position="390"/>
    </location>
</feature>
<feature type="sequence conflict" description="In Ref. 1; AAT42266." evidence="7" ref="1">
    <original>D</original>
    <variation>V</variation>
    <location>
        <position position="433"/>
    </location>
</feature>
<feature type="sequence conflict" description="In Ref. 1; AAT42266." evidence="7" ref="1">
    <original>K</original>
    <variation>N</variation>
    <location>
        <position position="436"/>
    </location>
</feature>
<feature type="sequence conflict" description="In Ref. 4; AAI27384." evidence="7" ref="4">
    <original>S</original>
    <variation>N</variation>
    <location>
        <position position="461"/>
    </location>
</feature>
<feature type="sequence conflict" description="In Ref. 1; AAT42266 and 4; AAI27384." evidence="7" ref="1 4">
    <original>L</original>
    <variation>S</variation>
    <location>
        <position position="468"/>
    </location>
</feature>
<feature type="sequence conflict" description="In Ref. 1; AAT42266." evidence="7" ref="1">
    <original>T</original>
    <variation>N</variation>
    <location>
        <position position="554"/>
    </location>
</feature>
<feature type="sequence conflict" description="In Ref. 4; AAI27384." evidence="7" ref="4">
    <original>T</original>
    <variation>N</variation>
    <location>
        <position position="644"/>
    </location>
</feature>
<feature type="sequence conflict" description="In Ref. 4; AAI27384." evidence="7" ref="4">
    <original>P</original>
    <variation>R</variation>
    <location>
        <position position="678"/>
    </location>
</feature>
<feature type="sequence conflict" description="In Ref. 3; AAS82844." evidence="7" ref="3">
    <original>S</original>
    <variation>F</variation>
    <location>
        <position position="687"/>
    </location>
</feature>
<feature type="sequence conflict" description="In Ref. 3; AAS82844." evidence="7" ref="3">
    <original>S</original>
    <variation>T</variation>
    <location>
        <position position="689"/>
    </location>
</feature>
<feature type="sequence conflict" description="In Ref. 4; AAI27384." evidence="7" ref="4">
    <original>Y</original>
    <variation>C</variation>
    <location>
        <position position="691"/>
    </location>
</feature>
<accession>Q673G8</accession>
<accession>A0JPE4</accession>
<accession>Q5YFS6</accession>
<accession>Q800W5</accession>
<dbReference type="EMBL" id="AY549444">
    <property type="protein sequence ID" value="AAT42266.1"/>
    <property type="molecule type" value="mRNA"/>
</dbReference>
<dbReference type="EMBL" id="AY208969">
    <property type="protein sequence ID" value="AAO49711.2"/>
    <property type="status" value="ALT_FRAME"/>
    <property type="molecule type" value="mRNA"/>
</dbReference>
<dbReference type="EMBL" id="AY513131">
    <property type="protein sequence ID" value="AAS82844.1"/>
    <property type="molecule type" value="mRNA"/>
</dbReference>
<dbReference type="EMBL" id="BC127383">
    <property type="protein sequence ID" value="AAI27384.1"/>
    <property type="molecule type" value="mRNA"/>
</dbReference>
<dbReference type="FunCoup" id="Q673G8">
    <property type="interactions" value="1253"/>
</dbReference>
<dbReference type="IntAct" id="Q673G8">
    <property type="interactions" value="1"/>
</dbReference>
<dbReference type="STRING" id="7955.ENSDARP00000078756"/>
<dbReference type="PaxDb" id="7955-ENSDARP00000078756"/>
<dbReference type="AGR" id="ZFIN:ZDB-GENE-030131-9975"/>
<dbReference type="ZFIN" id="ZDB-GENE-030131-9975">
    <property type="gene designation" value="dact2"/>
</dbReference>
<dbReference type="eggNOG" id="ENOG502QVT3">
    <property type="taxonomic scope" value="Eukaryota"/>
</dbReference>
<dbReference type="InParanoid" id="Q673G8"/>
<dbReference type="PhylomeDB" id="Q673G8"/>
<dbReference type="PRO" id="PR:Q673G8"/>
<dbReference type="Proteomes" id="UP000000437">
    <property type="component" value="Unplaced"/>
</dbReference>
<dbReference type="GO" id="GO:0005737">
    <property type="term" value="C:cytoplasm"/>
    <property type="evidence" value="ECO:0000318"/>
    <property type="project" value="GO_Central"/>
</dbReference>
<dbReference type="GO" id="GO:0005770">
    <property type="term" value="C:late endosome"/>
    <property type="evidence" value="ECO:0007669"/>
    <property type="project" value="UniProtKB-SubCell"/>
</dbReference>
<dbReference type="GO" id="GO:0005634">
    <property type="term" value="C:nucleus"/>
    <property type="evidence" value="ECO:0007669"/>
    <property type="project" value="UniProtKB-SubCell"/>
</dbReference>
<dbReference type="GO" id="GO:0005886">
    <property type="term" value="C:plasma membrane"/>
    <property type="evidence" value="ECO:0007669"/>
    <property type="project" value="UniProtKB-SubCell"/>
</dbReference>
<dbReference type="GO" id="GO:0048332">
    <property type="term" value="P:mesoderm morphogenesis"/>
    <property type="evidence" value="ECO:0000315"/>
    <property type="project" value="ZFIN"/>
</dbReference>
<dbReference type="GO" id="GO:1900108">
    <property type="term" value="P:negative regulation of nodal signaling pathway"/>
    <property type="evidence" value="ECO:0000314"/>
    <property type="project" value="UniProtKB"/>
</dbReference>
<dbReference type="GO" id="GO:0016055">
    <property type="term" value="P:Wnt signaling pathway"/>
    <property type="evidence" value="ECO:0000315"/>
    <property type="project" value="ZFIN"/>
</dbReference>
<dbReference type="InterPro" id="IPR024843">
    <property type="entry name" value="Dapper"/>
</dbReference>
<dbReference type="PANTHER" id="PTHR15919:SF13">
    <property type="entry name" value="DAPPER HOMOLOG 2"/>
    <property type="match status" value="1"/>
</dbReference>
<dbReference type="PANTHER" id="PTHR15919">
    <property type="entry name" value="DAPPER-RELATED"/>
    <property type="match status" value="1"/>
</dbReference>
<dbReference type="Pfam" id="PF15268">
    <property type="entry name" value="Dapper"/>
    <property type="match status" value="1"/>
</dbReference>
<gene>
    <name type="primary">dact2</name>
    <name type="synonym">dpr2</name>
    <name type="synonym">frd2</name>
    <name type="ORF">zgc:152832</name>
</gene>
<evidence type="ECO:0000250" key="1"/>
<evidence type="ECO:0000255" key="2"/>
<evidence type="ECO:0000256" key="3">
    <source>
        <dbReference type="SAM" id="MobiDB-lite"/>
    </source>
</evidence>
<evidence type="ECO:0000269" key="4">
    <source>
    </source>
</evidence>
<evidence type="ECO:0000269" key="5">
    <source>
    </source>
</evidence>
<evidence type="ECO:0000269" key="6">
    <source>
    </source>
</evidence>
<evidence type="ECO:0000305" key="7"/>
<organism>
    <name type="scientific">Danio rerio</name>
    <name type="common">Zebrafish</name>
    <name type="synonym">Brachydanio rerio</name>
    <dbReference type="NCBI Taxonomy" id="7955"/>
    <lineage>
        <taxon>Eukaryota</taxon>
        <taxon>Metazoa</taxon>
        <taxon>Chordata</taxon>
        <taxon>Craniata</taxon>
        <taxon>Vertebrata</taxon>
        <taxon>Euteleostomi</taxon>
        <taxon>Actinopterygii</taxon>
        <taxon>Neopterygii</taxon>
        <taxon>Teleostei</taxon>
        <taxon>Ostariophysi</taxon>
        <taxon>Cypriniformes</taxon>
        <taxon>Danionidae</taxon>
        <taxon>Danioninae</taxon>
        <taxon>Danio</taxon>
    </lineage>
</organism>
<sequence>MLGRKIPGSGVLGAGAGMDRGRTGERLHAALAGLQELHFLRDKQSAMVHWALTLNRDQPDPSKQENVSKEELRLEATLSLLKQQLTRLRRQDVGLKTHLQQLDQQITELKLDVCKASTEHLESDSRPSSGFYELSDGGSGSLSNSCTSVYSESLSSSSQTSLLPLLSTSYASHGRSSCGQTGVSRRCSADESTAQSDAPRSGVKLGSSLIRTATARADRARQRPVSTGDLDRMIGPGFGAFKSTDVKSSTPCSSPQNPSVDPKYQSNLVSSNGTEVYRYPSPLHAVALQSPIFSCTSDQGSSVALDEMPEEETQNLNEESTISSSVGYINKLLQRSSSRVNLLSSIKRIETVSGTHEQIPRSQEMIYGSLNGPQLLGSLQQLSMPLENALETGKTSALNNNQKQMDPPCLGSNFKEVEVQMLHHGKHPESSLDLQKNNFPINNTAGKVGAESDNGASEKRSGHFPKDLSVVQKPVERKSSFTSGREGSRASCHDKSSIPQSEFVHAQFVPAGSQRVKVRQADKKTKSVKLRKKSSEKPSAKKQHQKPLSREFCTKNRTDLKQSGSCRGKVTYLEESQAQSCSDCSCNGLINSHCIQNNHQQIPSSKSTKSRKAPEPVYHPLDHAKKKPSSRKWPSSSEIPLPPTLHTQRSKEMLNSRKVAMVRSVSARPRSGHWGCPPPRALPHSLSTSSYFSYLESRYPAAPVSSRHPPRCESEFSEYSAECASLFHSTIAASSDGEMSDYTTNRFGDSESSQGSQTASESDSSLSLDEEDLLEEEEEDEGGLVWAQAAMGTTAAGFSLQQHHRSESAACRIKASRALKKKIRRFQPASLKVMTLV</sequence>